<protein>
    <recommendedName>
        <fullName evidence="1">Methionine--tRNA ligase</fullName>
        <ecNumber evidence="1">6.1.1.10</ecNumber>
    </recommendedName>
    <alternativeName>
        <fullName evidence="1">Methionyl-tRNA synthetase</fullName>
        <shortName evidence="1">MetRS</shortName>
    </alternativeName>
</protein>
<proteinExistence type="inferred from homology"/>
<gene>
    <name evidence="1" type="primary">metG</name>
    <name type="ordered locus">BCG9842_B0067</name>
</gene>
<dbReference type="EC" id="6.1.1.10" evidence="1"/>
<dbReference type="EMBL" id="CP001186">
    <property type="protein sequence ID" value="ACK96837.1"/>
    <property type="molecule type" value="Genomic_DNA"/>
</dbReference>
<dbReference type="RefSeq" id="WP_000021590.1">
    <property type="nucleotide sequence ID" value="NC_011772.1"/>
</dbReference>
<dbReference type="SMR" id="B7INU9"/>
<dbReference type="KEGG" id="bcg:BCG9842_B0067"/>
<dbReference type="HOGENOM" id="CLU_009710_1_2_9"/>
<dbReference type="Proteomes" id="UP000006744">
    <property type="component" value="Chromosome"/>
</dbReference>
<dbReference type="GO" id="GO:0005829">
    <property type="term" value="C:cytosol"/>
    <property type="evidence" value="ECO:0007669"/>
    <property type="project" value="TreeGrafter"/>
</dbReference>
<dbReference type="GO" id="GO:0005524">
    <property type="term" value="F:ATP binding"/>
    <property type="evidence" value="ECO:0007669"/>
    <property type="project" value="UniProtKB-UniRule"/>
</dbReference>
<dbReference type="GO" id="GO:0046872">
    <property type="term" value="F:metal ion binding"/>
    <property type="evidence" value="ECO:0007669"/>
    <property type="project" value="UniProtKB-KW"/>
</dbReference>
<dbReference type="GO" id="GO:0004825">
    <property type="term" value="F:methionine-tRNA ligase activity"/>
    <property type="evidence" value="ECO:0007669"/>
    <property type="project" value="UniProtKB-UniRule"/>
</dbReference>
<dbReference type="GO" id="GO:0006431">
    <property type="term" value="P:methionyl-tRNA aminoacylation"/>
    <property type="evidence" value="ECO:0007669"/>
    <property type="project" value="UniProtKB-UniRule"/>
</dbReference>
<dbReference type="CDD" id="cd07957">
    <property type="entry name" value="Anticodon_Ia_Met"/>
    <property type="match status" value="1"/>
</dbReference>
<dbReference type="CDD" id="cd00814">
    <property type="entry name" value="MetRS_core"/>
    <property type="match status" value="1"/>
</dbReference>
<dbReference type="FunFam" id="2.20.28.20:FF:000001">
    <property type="entry name" value="Methionine--tRNA ligase"/>
    <property type="match status" value="1"/>
</dbReference>
<dbReference type="Gene3D" id="3.40.50.620">
    <property type="entry name" value="HUPs"/>
    <property type="match status" value="1"/>
</dbReference>
<dbReference type="Gene3D" id="1.10.730.10">
    <property type="entry name" value="Isoleucyl-tRNA Synthetase, Domain 1"/>
    <property type="match status" value="1"/>
</dbReference>
<dbReference type="Gene3D" id="2.20.28.20">
    <property type="entry name" value="Methionyl-tRNA synthetase, Zn-domain"/>
    <property type="match status" value="1"/>
</dbReference>
<dbReference type="HAMAP" id="MF_00098">
    <property type="entry name" value="Met_tRNA_synth_type1"/>
    <property type="match status" value="1"/>
</dbReference>
<dbReference type="InterPro" id="IPR001412">
    <property type="entry name" value="aa-tRNA-synth_I_CS"/>
</dbReference>
<dbReference type="InterPro" id="IPR041872">
    <property type="entry name" value="Anticodon_Met"/>
</dbReference>
<dbReference type="InterPro" id="IPR013155">
    <property type="entry name" value="M/V/L/I-tRNA-synth_anticd-bd"/>
</dbReference>
<dbReference type="InterPro" id="IPR023458">
    <property type="entry name" value="Met-tRNA_ligase_1"/>
</dbReference>
<dbReference type="InterPro" id="IPR014758">
    <property type="entry name" value="Met-tRNA_synth"/>
</dbReference>
<dbReference type="InterPro" id="IPR015413">
    <property type="entry name" value="Methionyl/Leucyl_tRNA_Synth"/>
</dbReference>
<dbReference type="InterPro" id="IPR033911">
    <property type="entry name" value="MetRS_core"/>
</dbReference>
<dbReference type="InterPro" id="IPR029038">
    <property type="entry name" value="MetRS_Zn"/>
</dbReference>
<dbReference type="InterPro" id="IPR014729">
    <property type="entry name" value="Rossmann-like_a/b/a_fold"/>
</dbReference>
<dbReference type="InterPro" id="IPR009080">
    <property type="entry name" value="tRNAsynth_Ia_anticodon-bd"/>
</dbReference>
<dbReference type="NCBIfam" id="TIGR00398">
    <property type="entry name" value="metG"/>
    <property type="match status" value="1"/>
</dbReference>
<dbReference type="PANTHER" id="PTHR45765">
    <property type="entry name" value="METHIONINE--TRNA LIGASE"/>
    <property type="match status" value="1"/>
</dbReference>
<dbReference type="PANTHER" id="PTHR45765:SF1">
    <property type="entry name" value="METHIONINE--TRNA LIGASE, CYTOPLASMIC"/>
    <property type="match status" value="1"/>
</dbReference>
<dbReference type="Pfam" id="PF08264">
    <property type="entry name" value="Anticodon_1"/>
    <property type="match status" value="1"/>
</dbReference>
<dbReference type="Pfam" id="PF09334">
    <property type="entry name" value="tRNA-synt_1g"/>
    <property type="match status" value="1"/>
</dbReference>
<dbReference type="PRINTS" id="PR01041">
    <property type="entry name" value="TRNASYNTHMET"/>
</dbReference>
<dbReference type="SUPFAM" id="SSF47323">
    <property type="entry name" value="Anticodon-binding domain of a subclass of class I aminoacyl-tRNA synthetases"/>
    <property type="match status" value="1"/>
</dbReference>
<dbReference type="SUPFAM" id="SSF57770">
    <property type="entry name" value="Methionyl-tRNA synthetase (MetRS), Zn-domain"/>
    <property type="match status" value="1"/>
</dbReference>
<dbReference type="SUPFAM" id="SSF52374">
    <property type="entry name" value="Nucleotidylyl transferase"/>
    <property type="match status" value="1"/>
</dbReference>
<dbReference type="PROSITE" id="PS00178">
    <property type="entry name" value="AA_TRNA_LIGASE_I"/>
    <property type="match status" value="1"/>
</dbReference>
<comment type="function">
    <text evidence="1">Is required not only for elongation of protein synthesis but also for the initiation of all mRNA translation through initiator tRNA(fMet) aminoacylation.</text>
</comment>
<comment type="catalytic activity">
    <reaction evidence="1">
        <text>tRNA(Met) + L-methionine + ATP = L-methionyl-tRNA(Met) + AMP + diphosphate</text>
        <dbReference type="Rhea" id="RHEA:13481"/>
        <dbReference type="Rhea" id="RHEA-COMP:9667"/>
        <dbReference type="Rhea" id="RHEA-COMP:9698"/>
        <dbReference type="ChEBI" id="CHEBI:30616"/>
        <dbReference type="ChEBI" id="CHEBI:33019"/>
        <dbReference type="ChEBI" id="CHEBI:57844"/>
        <dbReference type="ChEBI" id="CHEBI:78442"/>
        <dbReference type="ChEBI" id="CHEBI:78530"/>
        <dbReference type="ChEBI" id="CHEBI:456215"/>
        <dbReference type="EC" id="6.1.1.10"/>
    </reaction>
</comment>
<comment type="cofactor">
    <cofactor evidence="1">
        <name>Zn(2+)</name>
        <dbReference type="ChEBI" id="CHEBI:29105"/>
    </cofactor>
    <text evidence="1">Binds 1 zinc ion per subunit.</text>
</comment>
<comment type="subunit">
    <text evidence="1">Monomer.</text>
</comment>
<comment type="subcellular location">
    <subcellularLocation>
        <location evidence="1">Cytoplasm</location>
    </subcellularLocation>
</comment>
<comment type="similarity">
    <text evidence="1">Belongs to the class-I aminoacyl-tRNA synthetase family. MetG type 1 subfamily.</text>
</comment>
<feature type="chain" id="PRO_1000199276" description="Methionine--tRNA ligase">
    <location>
        <begin position="1"/>
        <end position="544"/>
    </location>
</feature>
<feature type="short sequence motif" description="'HIGH' region">
    <location>
        <begin position="10"/>
        <end position="20"/>
    </location>
</feature>
<feature type="short sequence motif" description="'KMSKS' region">
    <location>
        <begin position="329"/>
        <end position="333"/>
    </location>
</feature>
<feature type="binding site" evidence="1">
    <location>
        <position position="141"/>
    </location>
    <ligand>
        <name>Zn(2+)</name>
        <dbReference type="ChEBI" id="CHEBI:29105"/>
    </ligand>
</feature>
<feature type="binding site" evidence="1">
    <location>
        <position position="144"/>
    </location>
    <ligand>
        <name>Zn(2+)</name>
        <dbReference type="ChEBI" id="CHEBI:29105"/>
    </ligand>
</feature>
<feature type="binding site" evidence="1">
    <location>
        <position position="153"/>
    </location>
    <ligand>
        <name>Zn(2+)</name>
        <dbReference type="ChEBI" id="CHEBI:29105"/>
    </ligand>
</feature>
<feature type="binding site" evidence="1">
    <location>
        <position position="156"/>
    </location>
    <ligand>
        <name>Zn(2+)</name>
        <dbReference type="ChEBI" id="CHEBI:29105"/>
    </ligand>
</feature>
<feature type="binding site" evidence="1">
    <location>
        <position position="332"/>
    </location>
    <ligand>
        <name>ATP</name>
        <dbReference type="ChEBI" id="CHEBI:30616"/>
    </ligand>
</feature>
<evidence type="ECO:0000255" key="1">
    <source>
        <dbReference type="HAMAP-Rule" id="MF_00098"/>
    </source>
</evidence>
<keyword id="KW-0030">Aminoacyl-tRNA synthetase</keyword>
<keyword id="KW-0067">ATP-binding</keyword>
<keyword id="KW-0963">Cytoplasm</keyword>
<keyword id="KW-0436">Ligase</keyword>
<keyword id="KW-0479">Metal-binding</keyword>
<keyword id="KW-0547">Nucleotide-binding</keyword>
<keyword id="KW-0648">Protein biosynthesis</keyword>
<keyword id="KW-0862">Zinc</keyword>
<organism>
    <name type="scientific">Bacillus cereus (strain G9842)</name>
    <dbReference type="NCBI Taxonomy" id="405531"/>
    <lineage>
        <taxon>Bacteria</taxon>
        <taxon>Bacillati</taxon>
        <taxon>Bacillota</taxon>
        <taxon>Bacilli</taxon>
        <taxon>Bacillales</taxon>
        <taxon>Bacillaceae</taxon>
        <taxon>Bacillus</taxon>
        <taxon>Bacillus cereus group</taxon>
    </lineage>
</organism>
<reference key="1">
    <citation type="submission" date="2008-10" db="EMBL/GenBank/DDBJ databases">
        <title>Genome sequence of Bacillus cereus G9842.</title>
        <authorList>
            <person name="Dodson R.J."/>
            <person name="Durkin A.S."/>
            <person name="Rosovitz M.J."/>
            <person name="Rasko D.A."/>
            <person name="Hoffmaster A."/>
            <person name="Ravel J."/>
            <person name="Sutton G."/>
        </authorList>
    </citation>
    <scope>NUCLEOTIDE SEQUENCE [LARGE SCALE GENOMIC DNA]</scope>
    <source>
        <strain>G9842</strain>
    </source>
</reference>
<sequence>MSIFIGGAWPYANGSLHLGHIASLLPGDILARYYRAKGENVLYVSGSDCNGTPIAIRAKQEGVTAKEIANKYHEEFQRCFRDLGFTYDCYTRTDSEHHHETVQKVFLRLLEEGYIYKKTVEQAYCKTCTQFLPDRYVEGICPHCHEAARGDQCDACSAILDPLDLLEKTCKLCGSTPSVEETEHFYFALHTFQQQIKKVVEIAKEKGTWRDNAIQLTERYVKEGLQDRVVSRDLPIGVPIPVKGYEDKKIYVWIEAVAGYYSASKYWAEETGKDDHEFWNSDAQTYYVHGKDNIPFHSIIWPAVLLGIGEEAIPRHIVSNEYLTVEKRKLSTSKNWAVWVPDILERYNPDSIRYFLTVNAPENRDTDFSWREFIYSHNSELLGAYGNFVNRTLKFIEKYYDGIVPQGTINVELKDKVEGLYKNVGEAIEQTTFKVALETIFDAVRFANKYFDERQPWKEREDNPVSCEETIYNCIYLIANFANLLEPFLPFSSERVRSTLSIVNRNWEPQNTLPNRIDSVQPLFERIDVKQIEHEIEKLYGAAK</sequence>
<name>SYM_BACC2</name>
<accession>B7INU9</accession>